<accession>A4YBR8</accession>
<dbReference type="EMBL" id="CP000681">
    <property type="protein sequence ID" value="ABP77401.1"/>
    <property type="molecule type" value="Genomic_DNA"/>
</dbReference>
<dbReference type="SMR" id="A4YBR8"/>
<dbReference type="STRING" id="319224.Sputcn32_3693"/>
<dbReference type="KEGG" id="spc:Sputcn32_3693"/>
<dbReference type="eggNOG" id="COG0792">
    <property type="taxonomic scope" value="Bacteria"/>
</dbReference>
<dbReference type="HOGENOM" id="CLU_115353_1_0_6"/>
<dbReference type="GO" id="GO:0003676">
    <property type="term" value="F:nucleic acid binding"/>
    <property type="evidence" value="ECO:0007669"/>
    <property type="project" value="InterPro"/>
</dbReference>
<dbReference type="CDD" id="cd20736">
    <property type="entry name" value="PoNe_Nuclease"/>
    <property type="match status" value="1"/>
</dbReference>
<dbReference type="Gene3D" id="3.40.1350.10">
    <property type="match status" value="1"/>
</dbReference>
<dbReference type="HAMAP" id="MF_00048">
    <property type="entry name" value="UPF0102"/>
    <property type="match status" value="1"/>
</dbReference>
<dbReference type="InterPro" id="IPR011335">
    <property type="entry name" value="Restrct_endonuc-II-like"/>
</dbReference>
<dbReference type="InterPro" id="IPR011856">
    <property type="entry name" value="tRNA_endonuc-like_dom_sf"/>
</dbReference>
<dbReference type="InterPro" id="IPR003509">
    <property type="entry name" value="UPF0102_YraN-like"/>
</dbReference>
<dbReference type="NCBIfam" id="NF009150">
    <property type="entry name" value="PRK12497.1-3"/>
    <property type="match status" value="1"/>
</dbReference>
<dbReference type="NCBIfam" id="TIGR00252">
    <property type="entry name" value="YraN family protein"/>
    <property type="match status" value="1"/>
</dbReference>
<dbReference type="PANTHER" id="PTHR34039">
    <property type="entry name" value="UPF0102 PROTEIN YRAN"/>
    <property type="match status" value="1"/>
</dbReference>
<dbReference type="PANTHER" id="PTHR34039:SF1">
    <property type="entry name" value="UPF0102 PROTEIN YRAN"/>
    <property type="match status" value="1"/>
</dbReference>
<dbReference type="Pfam" id="PF02021">
    <property type="entry name" value="UPF0102"/>
    <property type="match status" value="1"/>
</dbReference>
<dbReference type="SUPFAM" id="SSF52980">
    <property type="entry name" value="Restriction endonuclease-like"/>
    <property type="match status" value="1"/>
</dbReference>
<reference key="1">
    <citation type="submission" date="2007-04" db="EMBL/GenBank/DDBJ databases">
        <title>Complete sequence of Shewanella putrefaciens CN-32.</title>
        <authorList>
            <consortium name="US DOE Joint Genome Institute"/>
            <person name="Copeland A."/>
            <person name="Lucas S."/>
            <person name="Lapidus A."/>
            <person name="Barry K."/>
            <person name="Detter J.C."/>
            <person name="Glavina del Rio T."/>
            <person name="Hammon N."/>
            <person name="Israni S."/>
            <person name="Dalin E."/>
            <person name="Tice H."/>
            <person name="Pitluck S."/>
            <person name="Chain P."/>
            <person name="Malfatti S."/>
            <person name="Shin M."/>
            <person name="Vergez L."/>
            <person name="Schmutz J."/>
            <person name="Larimer F."/>
            <person name="Land M."/>
            <person name="Hauser L."/>
            <person name="Kyrpides N."/>
            <person name="Mikhailova N."/>
            <person name="Romine M.F."/>
            <person name="Fredrickson J."/>
            <person name="Tiedje J."/>
            <person name="Richardson P."/>
        </authorList>
    </citation>
    <scope>NUCLEOTIDE SEQUENCE [LARGE SCALE GENOMIC DNA]</scope>
    <source>
        <strain>CN-32 / ATCC BAA-453</strain>
    </source>
</reference>
<name>Y3693_SHEPC</name>
<comment type="similarity">
    <text evidence="1">Belongs to the UPF0102 family.</text>
</comment>
<protein>
    <recommendedName>
        <fullName evidence="1">UPF0102 protein Sputcn32_3693</fullName>
    </recommendedName>
</protein>
<organism>
    <name type="scientific">Shewanella putrefaciens (strain CN-32 / ATCC BAA-453)</name>
    <dbReference type="NCBI Taxonomy" id="319224"/>
    <lineage>
        <taxon>Bacteria</taxon>
        <taxon>Pseudomonadati</taxon>
        <taxon>Pseudomonadota</taxon>
        <taxon>Gammaproteobacteria</taxon>
        <taxon>Alteromonadales</taxon>
        <taxon>Shewanellaceae</taxon>
        <taxon>Shewanella</taxon>
    </lineage>
</organism>
<sequence>MILGQAAETLAQSHLEQQGLTFVERNVRYPFGEIDLVMRHKNHWVFVEVKYRSATQYGGALQAVSKAQIGRIRLAASHYLQIHRLDVPCRFDVVAIEGHQIHWLVDAF</sequence>
<gene>
    <name type="ordered locus">Sputcn32_3693</name>
</gene>
<evidence type="ECO:0000255" key="1">
    <source>
        <dbReference type="HAMAP-Rule" id="MF_00048"/>
    </source>
</evidence>
<feature type="chain" id="PRO_1000009260" description="UPF0102 protein Sputcn32_3693">
    <location>
        <begin position="1"/>
        <end position="108"/>
    </location>
</feature>
<proteinExistence type="inferred from homology"/>